<feature type="chain" id="PRO_1000076191" description="Aspartyl/glutamyl-tRNA(Asn/Gln) amidotransferase subunit C">
    <location>
        <begin position="1"/>
        <end position="95"/>
    </location>
</feature>
<gene>
    <name evidence="1" type="primary">gatC</name>
    <name type="ordered locus">PputGB1_0939</name>
</gene>
<organism>
    <name type="scientific">Pseudomonas putida (strain GB-1)</name>
    <dbReference type="NCBI Taxonomy" id="76869"/>
    <lineage>
        <taxon>Bacteria</taxon>
        <taxon>Pseudomonadati</taxon>
        <taxon>Pseudomonadota</taxon>
        <taxon>Gammaproteobacteria</taxon>
        <taxon>Pseudomonadales</taxon>
        <taxon>Pseudomonadaceae</taxon>
        <taxon>Pseudomonas</taxon>
    </lineage>
</organism>
<protein>
    <recommendedName>
        <fullName evidence="1">Aspartyl/glutamyl-tRNA(Asn/Gln) amidotransferase subunit C</fullName>
        <shortName evidence="1">Asp/Glu-ADT subunit C</shortName>
        <ecNumber evidence="1">6.3.5.-</ecNumber>
    </recommendedName>
</protein>
<keyword id="KW-0067">ATP-binding</keyword>
<keyword id="KW-0436">Ligase</keyword>
<keyword id="KW-0547">Nucleotide-binding</keyword>
<keyword id="KW-0648">Protein biosynthesis</keyword>
<name>GATC_PSEPG</name>
<proteinExistence type="inferred from homology"/>
<reference key="1">
    <citation type="submission" date="2008-01" db="EMBL/GenBank/DDBJ databases">
        <title>Complete sequence of Pseudomonas putida GB-1.</title>
        <authorList>
            <consortium name="US DOE Joint Genome Institute"/>
            <person name="Copeland A."/>
            <person name="Lucas S."/>
            <person name="Lapidus A."/>
            <person name="Barry K."/>
            <person name="Glavina del Rio T."/>
            <person name="Dalin E."/>
            <person name="Tice H."/>
            <person name="Pitluck S."/>
            <person name="Bruce D."/>
            <person name="Goodwin L."/>
            <person name="Chertkov O."/>
            <person name="Brettin T."/>
            <person name="Detter J.C."/>
            <person name="Han C."/>
            <person name="Kuske C.R."/>
            <person name="Schmutz J."/>
            <person name="Larimer F."/>
            <person name="Land M."/>
            <person name="Hauser L."/>
            <person name="Kyrpides N."/>
            <person name="Kim E."/>
            <person name="McCarthy J.K."/>
            <person name="Richardson P."/>
        </authorList>
    </citation>
    <scope>NUCLEOTIDE SEQUENCE [LARGE SCALE GENOMIC DNA]</scope>
    <source>
        <strain>GB-1</strain>
    </source>
</reference>
<comment type="function">
    <text evidence="1">Allows the formation of correctly charged Asn-tRNA(Asn) or Gln-tRNA(Gln) through the transamidation of misacylated Asp-tRNA(Asn) or Glu-tRNA(Gln) in organisms which lack either or both of asparaginyl-tRNA or glutaminyl-tRNA synthetases. The reaction takes place in the presence of glutamine and ATP through an activated phospho-Asp-tRNA(Asn) or phospho-Glu-tRNA(Gln).</text>
</comment>
<comment type="catalytic activity">
    <reaction evidence="1">
        <text>L-glutamyl-tRNA(Gln) + L-glutamine + ATP + H2O = L-glutaminyl-tRNA(Gln) + L-glutamate + ADP + phosphate + H(+)</text>
        <dbReference type="Rhea" id="RHEA:17521"/>
        <dbReference type="Rhea" id="RHEA-COMP:9681"/>
        <dbReference type="Rhea" id="RHEA-COMP:9684"/>
        <dbReference type="ChEBI" id="CHEBI:15377"/>
        <dbReference type="ChEBI" id="CHEBI:15378"/>
        <dbReference type="ChEBI" id="CHEBI:29985"/>
        <dbReference type="ChEBI" id="CHEBI:30616"/>
        <dbReference type="ChEBI" id="CHEBI:43474"/>
        <dbReference type="ChEBI" id="CHEBI:58359"/>
        <dbReference type="ChEBI" id="CHEBI:78520"/>
        <dbReference type="ChEBI" id="CHEBI:78521"/>
        <dbReference type="ChEBI" id="CHEBI:456216"/>
    </reaction>
</comment>
<comment type="catalytic activity">
    <reaction evidence="1">
        <text>L-aspartyl-tRNA(Asn) + L-glutamine + ATP + H2O = L-asparaginyl-tRNA(Asn) + L-glutamate + ADP + phosphate + 2 H(+)</text>
        <dbReference type="Rhea" id="RHEA:14513"/>
        <dbReference type="Rhea" id="RHEA-COMP:9674"/>
        <dbReference type="Rhea" id="RHEA-COMP:9677"/>
        <dbReference type="ChEBI" id="CHEBI:15377"/>
        <dbReference type="ChEBI" id="CHEBI:15378"/>
        <dbReference type="ChEBI" id="CHEBI:29985"/>
        <dbReference type="ChEBI" id="CHEBI:30616"/>
        <dbReference type="ChEBI" id="CHEBI:43474"/>
        <dbReference type="ChEBI" id="CHEBI:58359"/>
        <dbReference type="ChEBI" id="CHEBI:78515"/>
        <dbReference type="ChEBI" id="CHEBI:78516"/>
        <dbReference type="ChEBI" id="CHEBI:456216"/>
    </reaction>
</comment>
<comment type="subunit">
    <text evidence="1">Heterotrimer of A, B and C subunits.</text>
</comment>
<comment type="similarity">
    <text evidence="1">Belongs to the GatC family.</text>
</comment>
<sequence length="95" mass="10392">MALERCDVEKIAHLARLGLNDGELPRITDALNSILGLVDQMQAVDTTGIEPLAHPLEASQRLRPDQVTESNQRDAYQAIAPSTESGLYLVPKVIE</sequence>
<accession>B0KQG1</accession>
<evidence type="ECO:0000255" key="1">
    <source>
        <dbReference type="HAMAP-Rule" id="MF_00122"/>
    </source>
</evidence>
<dbReference type="EC" id="6.3.5.-" evidence="1"/>
<dbReference type="EMBL" id="CP000926">
    <property type="protein sequence ID" value="ABY96849.1"/>
    <property type="molecule type" value="Genomic_DNA"/>
</dbReference>
<dbReference type="RefSeq" id="WP_003255165.1">
    <property type="nucleotide sequence ID" value="NC_010322.1"/>
</dbReference>
<dbReference type="SMR" id="B0KQG1"/>
<dbReference type="GeneID" id="97166450"/>
<dbReference type="KEGG" id="ppg:PputGB1_0939"/>
<dbReference type="eggNOG" id="COG0721">
    <property type="taxonomic scope" value="Bacteria"/>
</dbReference>
<dbReference type="HOGENOM" id="CLU_105899_2_2_6"/>
<dbReference type="Proteomes" id="UP000002157">
    <property type="component" value="Chromosome"/>
</dbReference>
<dbReference type="GO" id="GO:0050566">
    <property type="term" value="F:asparaginyl-tRNA synthase (glutamine-hydrolyzing) activity"/>
    <property type="evidence" value="ECO:0007669"/>
    <property type="project" value="RHEA"/>
</dbReference>
<dbReference type="GO" id="GO:0005524">
    <property type="term" value="F:ATP binding"/>
    <property type="evidence" value="ECO:0007669"/>
    <property type="project" value="UniProtKB-KW"/>
</dbReference>
<dbReference type="GO" id="GO:0050567">
    <property type="term" value="F:glutaminyl-tRNA synthase (glutamine-hydrolyzing) activity"/>
    <property type="evidence" value="ECO:0007669"/>
    <property type="project" value="UniProtKB-UniRule"/>
</dbReference>
<dbReference type="GO" id="GO:0070681">
    <property type="term" value="P:glutaminyl-tRNAGln biosynthesis via transamidation"/>
    <property type="evidence" value="ECO:0007669"/>
    <property type="project" value="TreeGrafter"/>
</dbReference>
<dbReference type="GO" id="GO:0006450">
    <property type="term" value="P:regulation of translational fidelity"/>
    <property type="evidence" value="ECO:0007669"/>
    <property type="project" value="InterPro"/>
</dbReference>
<dbReference type="GO" id="GO:0006412">
    <property type="term" value="P:translation"/>
    <property type="evidence" value="ECO:0007669"/>
    <property type="project" value="UniProtKB-UniRule"/>
</dbReference>
<dbReference type="Gene3D" id="1.10.20.60">
    <property type="entry name" value="Glu-tRNAGln amidotransferase C subunit, N-terminal domain"/>
    <property type="match status" value="1"/>
</dbReference>
<dbReference type="HAMAP" id="MF_00122">
    <property type="entry name" value="GatC"/>
    <property type="match status" value="1"/>
</dbReference>
<dbReference type="InterPro" id="IPR036113">
    <property type="entry name" value="Asp/Glu-ADT_sf_sub_c"/>
</dbReference>
<dbReference type="InterPro" id="IPR003837">
    <property type="entry name" value="GatC"/>
</dbReference>
<dbReference type="NCBIfam" id="TIGR00135">
    <property type="entry name" value="gatC"/>
    <property type="match status" value="1"/>
</dbReference>
<dbReference type="PANTHER" id="PTHR15004">
    <property type="entry name" value="GLUTAMYL-TRNA(GLN) AMIDOTRANSFERASE SUBUNIT C, MITOCHONDRIAL"/>
    <property type="match status" value="1"/>
</dbReference>
<dbReference type="PANTHER" id="PTHR15004:SF0">
    <property type="entry name" value="GLUTAMYL-TRNA(GLN) AMIDOTRANSFERASE SUBUNIT C, MITOCHONDRIAL"/>
    <property type="match status" value="1"/>
</dbReference>
<dbReference type="Pfam" id="PF02686">
    <property type="entry name" value="GatC"/>
    <property type="match status" value="1"/>
</dbReference>
<dbReference type="SUPFAM" id="SSF141000">
    <property type="entry name" value="Glu-tRNAGln amidotransferase C subunit"/>
    <property type="match status" value="1"/>
</dbReference>